<accession>P20319</accession>
<sequence length="98" mass="10909">MAITKKFKVSFDVTLKLDSETEELMREKILDLAHRAGAGEEITPMDRELLVQALTRGPDGAAAFAVRQGIRNAVKEMFEETSDKSLLKLSPATVREVF</sequence>
<protein>
    <recommendedName>
        <fullName>Gene 5.5 protein</fullName>
    </recommendedName>
</protein>
<name>V55_BPT3</name>
<gene>
    <name type="primary">5.5</name>
</gene>
<organism>
    <name type="scientific">Enterobacteria phage T3</name>
    <name type="common">Bacteriophage T3</name>
    <dbReference type="NCBI Taxonomy" id="10759"/>
    <lineage>
        <taxon>Viruses</taxon>
        <taxon>Duplodnaviria</taxon>
        <taxon>Heunggongvirae</taxon>
        <taxon>Uroviricota</taxon>
        <taxon>Caudoviricetes</taxon>
        <taxon>Autographiviridae</taxon>
        <taxon>Studiervirinae</taxon>
        <taxon>Teetrevirus</taxon>
        <taxon>Teetrevirus T3</taxon>
    </lineage>
</organism>
<organismHost>
    <name type="scientific">Escherichia coli</name>
    <dbReference type="NCBI Taxonomy" id="562"/>
</organismHost>
<feature type="chain" id="PRO_0000106500" description="Gene 5.5 protein">
    <location>
        <begin position="1"/>
        <end position="98"/>
    </location>
</feature>
<reference key="1">
    <citation type="journal article" date="1989" name="J. Mol. Biol.">
        <title>Sequence of bacteriophage T3 DNA from gene 2.5 through gene 9.</title>
        <authorList>
            <person name="Beck P.J."/>
            <person name="Gonzalez S."/>
            <person name="Ward C.L."/>
            <person name="Molineux I.J."/>
        </authorList>
    </citation>
    <scope>NUCLEOTIDE SEQUENCE [GENOMIC DNA]</scope>
    <source>
        <strain>Luria</strain>
    </source>
</reference>
<dbReference type="EMBL" id="X17255">
    <property type="protein sequence ID" value="CAA35144.1"/>
    <property type="molecule type" value="Genomic_DNA"/>
</dbReference>
<dbReference type="PIR" id="S07515">
    <property type="entry name" value="S07515"/>
</dbReference>
<dbReference type="RefSeq" id="NP_523324.1">
    <property type="nucleotide sequence ID" value="NC_003298.1"/>
</dbReference>
<dbReference type="KEGG" id="vg:927422"/>
<dbReference type="OrthoDB" id="19025at10239"/>
<dbReference type="InterPro" id="IPR022611">
    <property type="entry name" value="Phage_T7_5.5"/>
</dbReference>
<dbReference type="Pfam" id="PF11247">
    <property type="entry name" value="Phage_T7_55"/>
    <property type="match status" value="1"/>
</dbReference>
<proteinExistence type="predicted"/>